<comment type="catalytic activity">
    <reaction evidence="1">
        <text>tRNA(Phe) + L-phenylalanine + ATP = L-phenylalanyl-tRNA(Phe) + AMP + diphosphate + H(+)</text>
        <dbReference type="Rhea" id="RHEA:19413"/>
        <dbReference type="Rhea" id="RHEA-COMP:9668"/>
        <dbReference type="Rhea" id="RHEA-COMP:9699"/>
        <dbReference type="ChEBI" id="CHEBI:15378"/>
        <dbReference type="ChEBI" id="CHEBI:30616"/>
        <dbReference type="ChEBI" id="CHEBI:33019"/>
        <dbReference type="ChEBI" id="CHEBI:58095"/>
        <dbReference type="ChEBI" id="CHEBI:78442"/>
        <dbReference type="ChEBI" id="CHEBI:78531"/>
        <dbReference type="ChEBI" id="CHEBI:456215"/>
        <dbReference type="EC" id="6.1.1.20"/>
    </reaction>
</comment>
<comment type="cofactor">
    <cofactor evidence="1">
        <name>Mg(2+)</name>
        <dbReference type="ChEBI" id="CHEBI:18420"/>
    </cofactor>
    <text evidence="1">Binds 2 magnesium ions per tetramer.</text>
</comment>
<comment type="subunit">
    <text evidence="1">Tetramer of two alpha and two beta subunits.</text>
</comment>
<comment type="subcellular location">
    <subcellularLocation>
        <location evidence="1">Cytoplasm</location>
    </subcellularLocation>
</comment>
<comment type="similarity">
    <text evidence="1">Belongs to the phenylalanyl-tRNA synthetase beta subunit family. Type 1 subfamily.</text>
</comment>
<keyword id="KW-0030">Aminoacyl-tRNA synthetase</keyword>
<keyword id="KW-0067">ATP-binding</keyword>
<keyword id="KW-0963">Cytoplasm</keyword>
<keyword id="KW-0436">Ligase</keyword>
<keyword id="KW-0460">Magnesium</keyword>
<keyword id="KW-0479">Metal-binding</keyword>
<keyword id="KW-0547">Nucleotide-binding</keyword>
<keyword id="KW-0648">Protein biosynthesis</keyword>
<keyword id="KW-1185">Reference proteome</keyword>
<keyword id="KW-0694">RNA-binding</keyword>
<keyword id="KW-0820">tRNA-binding</keyword>
<gene>
    <name evidence="1" type="primary">pheT</name>
    <name type="ordered locus">MS53_0306</name>
</gene>
<protein>
    <recommendedName>
        <fullName evidence="1">Phenylalanine--tRNA ligase beta subunit</fullName>
        <ecNumber evidence="1">6.1.1.20</ecNumber>
    </recommendedName>
    <alternativeName>
        <fullName evidence="1">Phenylalanyl-tRNA synthetase beta subunit</fullName>
        <shortName evidence="1">PheRS</shortName>
    </alternativeName>
</protein>
<dbReference type="EC" id="6.1.1.20" evidence="1"/>
<dbReference type="EMBL" id="AE017245">
    <property type="protein sequence ID" value="AAZ43719.2"/>
    <property type="molecule type" value="Genomic_DNA"/>
</dbReference>
<dbReference type="RefSeq" id="WP_041351937.1">
    <property type="nucleotide sequence ID" value="NC_007294.1"/>
</dbReference>
<dbReference type="SMR" id="Q4A6A2"/>
<dbReference type="STRING" id="262723.MS53_0306"/>
<dbReference type="KEGG" id="msy:MS53_0306"/>
<dbReference type="eggNOG" id="COG0072">
    <property type="taxonomic scope" value="Bacteria"/>
</dbReference>
<dbReference type="HOGENOM" id="CLU_016891_2_0_14"/>
<dbReference type="OrthoDB" id="9805455at2"/>
<dbReference type="Proteomes" id="UP000000549">
    <property type="component" value="Chromosome"/>
</dbReference>
<dbReference type="GO" id="GO:0009328">
    <property type="term" value="C:phenylalanine-tRNA ligase complex"/>
    <property type="evidence" value="ECO:0007669"/>
    <property type="project" value="TreeGrafter"/>
</dbReference>
<dbReference type="GO" id="GO:0005524">
    <property type="term" value="F:ATP binding"/>
    <property type="evidence" value="ECO:0007669"/>
    <property type="project" value="UniProtKB-UniRule"/>
</dbReference>
<dbReference type="GO" id="GO:0000287">
    <property type="term" value="F:magnesium ion binding"/>
    <property type="evidence" value="ECO:0007669"/>
    <property type="project" value="UniProtKB-UniRule"/>
</dbReference>
<dbReference type="GO" id="GO:0004826">
    <property type="term" value="F:phenylalanine-tRNA ligase activity"/>
    <property type="evidence" value="ECO:0007669"/>
    <property type="project" value="UniProtKB-UniRule"/>
</dbReference>
<dbReference type="GO" id="GO:0000049">
    <property type="term" value="F:tRNA binding"/>
    <property type="evidence" value="ECO:0007669"/>
    <property type="project" value="UniProtKB-KW"/>
</dbReference>
<dbReference type="GO" id="GO:0006432">
    <property type="term" value="P:phenylalanyl-tRNA aminoacylation"/>
    <property type="evidence" value="ECO:0007669"/>
    <property type="project" value="UniProtKB-UniRule"/>
</dbReference>
<dbReference type="CDD" id="cd02796">
    <property type="entry name" value="tRNA_bind_bactPheRS"/>
    <property type="match status" value="1"/>
</dbReference>
<dbReference type="Gene3D" id="3.30.56.10">
    <property type="match status" value="2"/>
</dbReference>
<dbReference type="Gene3D" id="3.30.930.10">
    <property type="entry name" value="Bira Bifunctional Protein, Domain 2"/>
    <property type="match status" value="1"/>
</dbReference>
<dbReference type="Gene3D" id="2.40.50.140">
    <property type="entry name" value="Nucleic acid-binding proteins"/>
    <property type="match status" value="1"/>
</dbReference>
<dbReference type="Gene3D" id="3.50.40.10">
    <property type="entry name" value="Phenylalanyl-trna Synthetase, Chain B, domain 3"/>
    <property type="match status" value="1"/>
</dbReference>
<dbReference type="HAMAP" id="MF_00283">
    <property type="entry name" value="Phe_tRNA_synth_beta1"/>
    <property type="match status" value="1"/>
</dbReference>
<dbReference type="InterPro" id="IPR045864">
    <property type="entry name" value="aa-tRNA-synth_II/BPL/LPL"/>
</dbReference>
<dbReference type="InterPro" id="IPR005146">
    <property type="entry name" value="B3/B4_tRNA-bd"/>
</dbReference>
<dbReference type="InterPro" id="IPR009061">
    <property type="entry name" value="DNA-bd_dom_put_sf"/>
</dbReference>
<dbReference type="InterPro" id="IPR012340">
    <property type="entry name" value="NA-bd_OB-fold"/>
</dbReference>
<dbReference type="InterPro" id="IPR045060">
    <property type="entry name" value="Phe-tRNA-ligase_IIc_bsu"/>
</dbReference>
<dbReference type="InterPro" id="IPR004532">
    <property type="entry name" value="Phe-tRNA-ligase_IIc_bsu_bact"/>
</dbReference>
<dbReference type="InterPro" id="IPR020825">
    <property type="entry name" value="Phe-tRNA_synthase-like_B3/B4"/>
</dbReference>
<dbReference type="InterPro" id="IPR041616">
    <property type="entry name" value="PheRS_beta_core"/>
</dbReference>
<dbReference type="InterPro" id="IPR002547">
    <property type="entry name" value="tRNA-bd_dom"/>
</dbReference>
<dbReference type="InterPro" id="IPR033714">
    <property type="entry name" value="tRNA_bind_bactPheRS"/>
</dbReference>
<dbReference type="InterPro" id="IPR005147">
    <property type="entry name" value="tRNA_synthase_B5-dom"/>
</dbReference>
<dbReference type="NCBIfam" id="NF001882">
    <property type="entry name" value="PRK00629.5-4"/>
    <property type="match status" value="1"/>
</dbReference>
<dbReference type="PANTHER" id="PTHR10947:SF0">
    <property type="entry name" value="PHENYLALANINE--TRNA LIGASE BETA SUBUNIT"/>
    <property type="match status" value="1"/>
</dbReference>
<dbReference type="PANTHER" id="PTHR10947">
    <property type="entry name" value="PHENYLALANYL-TRNA SYNTHETASE BETA CHAIN AND LEUCINE-RICH REPEAT-CONTAINING PROTEIN 47"/>
    <property type="match status" value="1"/>
</dbReference>
<dbReference type="Pfam" id="PF03483">
    <property type="entry name" value="B3_4"/>
    <property type="match status" value="1"/>
</dbReference>
<dbReference type="Pfam" id="PF03484">
    <property type="entry name" value="B5"/>
    <property type="match status" value="1"/>
</dbReference>
<dbReference type="Pfam" id="PF17759">
    <property type="entry name" value="tRNA_synthFbeta"/>
    <property type="match status" value="1"/>
</dbReference>
<dbReference type="SMART" id="SM00873">
    <property type="entry name" value="B3_4"/>
    <property type="match status" value="1"/>
</dbReference>
<dbReference type="SMART" id="SM00874">
    <property type="entry name" value="B5"/>
    <property type="match status" value="1"/>
</dbReference>
<dbReference type="SUPFAM" id="SSF55681">
    <property type="entry name" value="Class II aaRS and biotin synthetases"/>
    <property type="match status" value="1"/>
</dbReference>
<dbReference type="SUPFAM" id="SSF50249">
    <property type="entry name" value="Nucleic acid-binding proteins"/>
    <property type="match status" value="1"/>
</dbReference>
<dbReference type="SUPFAM" id="SSF56037">
    <property type="entry name" value="PheT/TilS domain"/>
    <property type="match status" value="1"/>
</dbReference>
<dbReference type="SUPFAM" id="SSF46955">
    <property type="entry name" value="Putative DNA-binding domain"/>
    <property type="match status" value="1"/>
</dbReference>
<dbReference type="PROSITE" id="PS51483">
    <property type="entry name" value="B5"/>
    <property type="match status" value="1"/>
</dbReference>
<dbReference type="PROSITE" id="PS50886">
    <property type="entry name" value="TRBD"/>
    <property type="match status" value="1"/>
</dbReference>
<sequence>MIYSLKHLNKYLPEIKLDQSVTKALESLGFEVEFFEKFSSSKGLLFAKVLNVFDNPNSTKLQVVELDTKLGELTIQTTNKVLSKGDLTICYPVGSSYQGKEFQEVTMQGYKSQGMLASFSEIGYDNSLLTDKDQILVLPKNFASLNDDASEKLELNDYIFELSITTNRNEINSYYFLAKELAAYYNTKFSCEFLDAKLKQSFESSFKFEGNFLDKNYSFTLLEAKGKVSTSFEEKLLLAKHKIDSKFNPAVNLTNLVLINLGIPIHVYDKAKLKSTKFSVGLYNGKVNLLGNKQVEVSDALAVFNGDKVVSLAATMGLEESKVDLQTSEFIFEMASFPSKLIRNNAKEIKMNSNASNLASKTITKYQVKLAHKFLFNYLKDLKLSNVVNDFELDKKVEINFDEEKLQRYSNGLPSSEFIKAFDKLKLLEFEFENQKIKVPLYRYDVSIFEDIIEELFRFYNYDNFKEIPYIQIPGELKADNKNFKEKLKALGYSEARTFTLVNEKDSKFDPLDLSDAIKLETFVSKEREFVRNSLAISLAEAVNNNKKKKINNVNLFEVGMVNANLFYACLATTDKSFLELKQDFVSFFDNLNLEFKKPKNQFLHPNYSAEIYLNDQKLGWIGKINPSFLDLDCLFVEFKYDLYFDDKFKKYEAPNLDVLKSIDLTFELNNNEHLQKYLDKINSVAKVFEIKEIDDFKKETSHNVSLRITAPSAEIDKLNSHFNKD</sequence>
<proteinExistence type="inferred from homology"/>
<name>SYFB_MYCS5</name>
<reference key="1">
    <citation type="journal article" date="2005" name="J. Bacteriol.">
        <title>Swine and poultry pathogens: the complete genome sequences of two strains of Mycoplasma hyopneumoniae and a strain of Mycoplasma synoviae.</title>
        <authorList>
            <person name="Vasconcelos A.T.R."/>
            <person name="Ferreira H.B."/>
            <person name="Bizarro C.V."/>
            <person name="Bonatto S.L."/>
            <person name="Carvalho M.O."/>
            <person name="Pinto P.M."/>
            <person name="Almeida D.F."/>
            <person name="Almeida L.G.P."/>
            <person name="Almeida R."/>
            <person name="Alves-Junior L."/>
            <person name="Assuncao E.N."/>
            <person name="Azevedo V.A.C."/>
            <person name="Bogo M.R."/>
            <person name="Brigido M.M."/>
            <person name="Brocchi M."/>
            <person name="Burity H.A."/>
            <person name="Camargo A.A."/>
            <person name="Camargo S.S."/>
            <person name="Carepo M.S."/>
            <person name="Carraro D.M."/>
            <person name="de Mattos Cascardo J.C."/>
            <person name="Castro L.A."/>
            <person name="Cavalcanti G."/>
            <person name="Chemale G."/>
            <person name="Collevatti R.G."/>
            <person name="Cunha C.W."/>
            <person name="Dallagiovanna B."/>
            <person name="Dambros B.P."/>
            <person name="Dellagostin O.A."/>
            <person name="Falcao C."/>
            <person name="Fantinatti-Garboggini F."/>
            <person name="Felipe M.S.S."/>
            <person name="Fiorentin L."/>
            <person name="Franco G.R."/>
            <person name="Freitas N.S.A."/>
            <person name="Frias D."/>
            <person name="Grangeiro T.B."/>
            <person name="Grisard E.C."/>
            <person name="Guimaraes C.T."/>
            <person name="Hungria M."/>
            <person name="Jardim S.N."/>
            <person name="Krieger M.A."/>
            <person name="Laurino J.P."/>
            <person name="Lima L.F.A."/>
            <person name="Lopes M.I."/>
            <person name="Loreto E.L.S."/>
            <person name="Madeira H.M.F."/>
            <person name="Manfio G.P."/>
            <person name="Maranhao A.Q."/>
            <person name="Martinkovics C.T."/>
            <person name="Medeiros S.R.B."/>
            <person name="Moreira M.A.M."/>
            <person name="Neiva M."/>
            <person name="Ramalho-Neto C.E."/>
            <person name="Nicolas M.F."/>
            <person name="Oliveira S.C."/>
            <person name="Paixao R.F.C."/>
            <person name="Pedrosa F.O."/>
            <person name="Pena S.D.J."/>
            <person name="Pereira M."/>
            <person name="Pereira-Ferrari L."/>
            <person name="Piffer I."/>
            <person name="Pinto L.S."/>
            <person name="Potrich D.P."/>
            <person name="Salim A.C.M."/>
            <person name="Santos F.R."/>
            <person name="Schmitt R."/>
            <person name="Schneider M.P.C."/>
            <person name="Schrank A."/>
            <person name="Schrank I.S."/>
            <person name="Schuck A.F."/>
            <person name="Seuanez H.N."/>
            <person name="Silva D.W."/>
            <person name="Silva R."/>
            <person name="Silva S.C."/>
            <person name="Soares C.M.A."/>
            <person name="Souza K.R.L."/>
            <person name="Souza R.C."/>
            <person name="Staats C.C."/>
            <person name="Steffens M.B.R."/>
            <person name="Teixeira S.M.R."/>
            <person name="Urmenyi T.P."/>
            <person name="Vainstein M.H."/>
            <person name="Zuccherato L.W."/>
            <person name="Simpson A.J.G."/>
            <person name="Zaha A."/>
        </authorList>
    </citation>
    <scope>NUCLEOTIDE SEQUENCE [LARGE SCALE GENOMIC DNA]</scope>
    <source>
        <strain>53</strain>
    </source>
</reference>
<feature type="chain" id="PRO_0000232814" description="Phenylalanine--tRNA ligase beta subunit">
    <location>
        <begin position="1"/>
        <end position="726"/>
    </location>
</feature>
<feature type="domain" description="tRNA-binding" evidence="1">
    <location>
        <begin position="38"/>
        <end position="150"/>
    </location>
</feature>
<feature type="domain" description="B5" evidence="1">
    <location>
        <begin position="394"/>
        <end position="467"/>
    </location>
</feature>
<feature type="binding site" evidence="1">
    <location>
        <position position="445"/>
    </location>
    <ligand>
        <name>Mg(2+)</name>
        <dbReference type="ChEBI" id="CHEBI:18420"/>
        <note>shared with alpha subunit</note>
    </ligand>
</feature>
<feature type="binding site" evidence="1">
    <location>
        <position position="451"/>
    </location>
    <ligand>
        <name>Mg(2+)</name>
        <dbReference type="ChEBI" id="CHEBI:18420"/>
        <note>shared with alpha subunit</note>
    </ligand>
</feature>
<feature type="binding site" evidence="1">
    <location>
        <position position="454"/>
    </location>
    <ligand>
        <name>Mg(2+)</name>
        <dbReference type="ChEBI" id="CHEBI:18420"/>
        <note>shared with alpha subunit</note>
    </ligand>
</feature>
<feature type="binding site" evidence="1">
    <location>
        <position position="455"/>
    </location>
    <ligand>
        <name>Mg(2+)</name>
        <dbReference type="ChEBI" id="CHEBI:18420"/>
        <note>shared with alpha subunit</note>
    </ligand>
</feature>
<organism>
    <name type="scientific">Mycoplasmopsis synoviae (strain 53)</name>
    <name type="common">Mycoplasma synoviae</name>
    <dbReference type="NCBI Taxonomy" id="262723"/>
    <lineage>
        <taxon>Bacteria</taxon>
        <taxon>Bacillati</taxon>
        <taxon>Mycoplasmatota</taxon>
        <taxon>Mycoplasmoidales</taxon>
        <taxon>Metamycoplasmataceae</taxon>
        <taxon>Mycoplasmopsis</taxon>
    </lineage>
</organism>
<accession>Q4A6A2</accession>
<evidence type="ECO:0000255" key="1">
    <source>
        <dbReference type="HAMAP-Rule" id="MF_00283"/>
    </source>
</evidence>